<evidence type="ECO:0000255" key="1">
    <source>
        <dbReference type="HAMAP-Rule" id="MF_00075"/>
    </source>
</evidence>
<proteinExistence type="inferred from homology"/>
<name>IF1_CHLFF</name>
<gene>
    <name evidence="1" type="primary">infA</name>
    <name type="ordered locus">CF0312</name>
</gene>
<comment type="function">
    <text evidence="1">One of the essential components for the initiation of protein synthesis. Stabilizes the binding of IF-2 and IF-3 on the 30S subunit to which N-formylmethionyl-tRNA(fMet) subsequently binds. Helps modulate mRNA selection, yielding the 30S pre-initiation complex (PIC). Upon addition of the 50S ribosomal subunit IF-1, IF-2 and IF-3 are released leaving the mature 70S translation initiation complex.</text>
</comment>
<comment type="subunit">
    <text evidence="1">Component of the 30S ribosomal translation pre-initiation complex which assembles on the 30S ribosome in the order IF-2 and IF-3, IF-1 and N-formylmethionyl-tRNA(fMet); mRNA recruitment can occur at any time during PIC assembly.</text>
</comment>
<comment type="subcellular location">
    <subcellularLocation>
        <location evidence="1">Cytoplasm</location>
    </subcellularLocation>
</comment>
<comment type="similarity">
    <text evidence="1">Belongs to the IF-1 family.</text>
</comment>
<protein>
    <recommendedName>
        <fullName evidence="1">Translation initiation factor IF-1</fullName>
    </recommendedName>
</protein>
<accession>Q255F4</accession>
<feature type="chain" id="PRO_0000263782" description="Translation initiation factor IF-1">
    <location>
        <begin position="1"/>
        <end position="73"/>
    </location>
</feature>
<feature type="domain" description="S1-like" evidence="1">
    <location>
        <begin position="1"/>
        <end position="73"/>
    </location>
</feature>
<organism>
    <name type="scientific">Chlamydia felis (strain Fe/C-56)</name>
    <name type="common">Chlamydophila felis</name>
    <dbReference type="NCBI Taxonomy" id="264202"/>
    <lineage>
        <taxon>Bacteria</taxon>
        <taxon>Pseudomonadati</taxon>
        <taxon>Chlamydiota</taxon>
        <taxon>Chlamydiia</taxon>
        <taxon>Chlamydiales</taxon>
        <taxon>Chlamydiaceae</taxon>
        <taxon>Chlamydia/Chlamydophila group</taxon>
        <taxon>Chlamydia</taxon>
    </lineage>
</organism>
<dbReference type="EMBL" id="AP006861">
    <property type="protein sequence ID" value="BAE81084.1"/>
    <property type="molecule type" value="Genomic_DNA"/>
</dbReference>
<dbReference type="RefSeq" id="WP_006343365.1">
    <property type="nucleotide sequence ID" value="NC_007899.1"/>
</dbReference>
<dbReference type="SMR" id="Q255F4"/>
<dbReference type="STRING" id="264202.CF0312"/>
<dbReference type="GeneID" id="93024221"/>
<dbReference type="KEGG" id="cfe:CF0312"/>
<dbReference type="eggNOG" id="COG0361">
    <property type="taxonomic scope" value="Bacteria"/>
</dbReference>
<dbReference type="HOGENOM" id="CLU_151267_1_0_0"/>
<dbReference type="OrthoDB" id="9803250at2"/>
<dbReference type="Proteomes" id="UP000001260">
    <property type="component" value="Chromosome"/>
</dbReference>
<dbReference type="GO" id="GO:0005829">
    <property type="term" value="C:cytosol"/>
    <property type="evidence" value="ECO:0007669"/>
    <property type="project" value="TreeGrafter"/>
</dbReference>
<dbReference type="GO" id="GO:0043022">
    <property type="term" value="F:ribosome binding"/>
    <property type="evidence" value="ECO:0007669"/>
    <property type="project" value="UniProtKB-UniRule"/>
</dbReference>
<dbReference type="GO" id="GO:0019843">
    <property type="term" value="F:rRNA binding"/>
    <property type="evidence" value="ECO:0007669"/>
    <property type="project" value="UniProtKB-UniRule"/>
</dbReference>
<dbReference type="GO" id="GO:0003743">
    <property type="term" value="F:translation initiation factor activity"/>
    <property type="evidence" value="ECO:0007669"/>
    <property type="project" value="UniProtKB-UniRule"/>
</dbReference>
<dbReference type="CDD" id="cd04451">
    <property type="entry name" value="S1_IF1"/>
    <property type="match status" value="1"/>
</dbReference>
<dbReference type="FunFam" id="2.40.50.140:FF:000002">
    <property type="entry name" value="Translation initiation factor IF-1"/>
    <property type="match status" value="1"/>
</dbReference>
<dbReference type="Gene3D" id="2.40.50.140">
    <property type="entry name" value="Nucleic acid-binding proteins"/>
    <property type="match status" value="1"/>
</dbReference>
<dbReference type="HAMAP" id="MF_00075">
    <property type="entry name" value="IF_1"/>
    <property type="match status" value="1"/>
</dbReference>
<dbReference type="InterPro" id="IPR012340">
    <property type="entry name" value="NA-bd_OB-fold"/>
</dbReference>
<dbReference type="InterPro" id="IPR006196">
    <property type="entry name" value="RNA-binding_domain_S1_IF1"/>
</dbReference>
<dbReference type="InterPro" id="IPR003029">
    <property type="entry name" value="S1_domain"/>
</dbReference>
<dbReference type="InterPro" id="IPR004368">
    <property type="entry name" value="TIF_IF1"/>
</dbReference>
<dbReference type="NCBIfam" id="TIGR00008">
    <property type="entry name" value="infA"/>
    <property type="match status" value="1"/>
</dbReference>
<dbReference type="PANTHER" id="PTHR33370">
    <property type="entry name" value="TRANSLATION INITIATION FACTOR IF-1, CHLOROPLASTIC"/>
    <property type="match status" value="1"/>
</dbReference>
<dbReference type="PANTHER" id="PTHR33370:SF1">
    <property type="entry name" value="TRANSLATION INITIATION FACTOR IF-1, CHLOROPLASTIC"/>
    <property type="match status" value="1"/>
</dbReference>
<dbReference type="Pfam" id="PF01176">
    <property type="entry name" value="eIF-1a"/>
    <property type="match status" value="1"/>
</dbReference>
<dbReference type="SMART" id="SM00316">
    <property type="entry name" value="S1"/>
    <property type="match status" value="1"/>
</dbReference>
<dbReference type="SUPFAM" id="SSF50249">
    <property type="entry name" value="Nucleic acid-binding proteins"/>
    <property type="match status" value="1"/>
</dbReference>
<dbReference type="PROSITE" id="PS50832">
    <property type="entry name" value="S1_IF1_TYPE"/>
    <property type="match status" value="1"/>
</dbReference>
<sequence>MAKKEDTIVLEGRVQELLPGMHFKILLENGMPVTAHLCGKMRMSNIRLLVGDRVTVEMSAYDLTKARVVYRHR</sequence>
<reference key="1">
    <citation type="journal article" date="2006" name="DNA Res.">
        <title>Genome sequence of the cat pathogen, Chlamydophila felis.</title>
        <authorList>
            <person name="Azuma Y."/>
            <person name="Hirakawa H."/>
            <person name="Yamashita A."/>
            <person name="Cai Y."/>
            <person name="Rahman M.A."/>
            <person name="Suzuki H."/>
            <person name="Mitaku S."/>
            <person name="Toh H."/>
            <person name="Goto S."/>
            <person name="Murakami T."/>
            <person name="Sugi K."/>
            <person name="Hayashi H."/>
            <person name="Fukushi H."/>
            <person name="Hattori M."/>
            <person name="Kuhara S."/>
            <person name="Shirai M."/>
        </authorList>
    </citation>
    <scope>NUCLEOTIDE SEQUENCE [LARGE SCALE GENOMIC DNA]</scope>
    <source>
        <strain>Fe/C-56</strain>
    </source>
</reference>
<keyword id="KW-0963">Cytoplasm</keyword>
<keyword id="KW-0396">Initiation factor</keyword>
<keyword id="KW-0648">Protein biosynthesis</keyword>
<keyword id="KW-0694">RNA-binding</keyword>
<keyword id="KW-0699">rRNA-binding</keyword>